<keyword id="KW-0378">Hydrolase</keyword>
<keyword id="KW-0479">Metal-binding</keyword>
<keyword id="KW-0507">mRNA processing</keyword>
<keyword id="KW-1185">Reference proteome</keyword>
<keyword id="KW-0862">Zinc</keyword>
<name>ABEC2_BOVIN</name>
<protein>
    <recommendedName>
        <fullName>Probable C-&gt;U-editing enzyme APOBEC-2</fullName>
        <ecNumber>3.5.4.36</ecNumber>
    </recommendedName>
    <alternativeName>
        <fullName>mRNA(cytosine(6666)) deaminase 2</fullName>
    </alternativeName>
</protein>
<sequence length="224" mass="25962">MAQKEEAAAAAEPASQNGEEVENLEDPEKLKELIELPPFEIVTGERLPAHYFKFQFRNVEYSSGRNKTFLCYVVEAQSKGGQVQASRGYLEDEHATNHAEEAFFNSIMPTFDPALRYMVTWYVSSSPCAACADRIVKTLNKTKNLRLLILVGRLFMWEEPEIQAALRKLKEAGCRLRIMKPQDFEYIWQNFVEQEEGESKAFEPWEDIQENFLYYEEKLADILK</sequence>
<organism>
    <name type="scientific">Bos taurus</name>
    <name type="common">Bovine</name>
    <dbReference type="NCBI Taxonomy" id="9913"/>
    <lineage>
        <taxon>Eukaryota</taxon>
        <taxon>Metazoa</taxon>
        <taxon>Chordata</taxon>
        <taxon>Craniata</taxon>
        <taxon>Vertebrata</taxon>
        <taxon>Euteleostomi</taxon>
        <taxon>Mammalia</taxon>
        <taxon>Eutheria</taxon>
        <taxon>Laurasiatheria</taxon>
        <taxon>Artiodactyla</taxon>
        <taxon>Ruminantia</taxon>
        <taxon>Pecora</taxon>
        <taxon>Bovidae</taxon>
        <taxon>Bovinae</taxon>
        <taxon>Bos</taxon>
    </lineage>
</organism>
<proteinExistence type="evidence at transcript level"/>
<gene>
    <name type="primary">APOBEC2</name>
</gene>
<comment type="function">
    <text evidence="1">Probable C to U editing enzyme whose physiological substrate is not yet known. Does not display detectable apoB mRNA editing. Has a low intrinsic cytidine deaminase activity. May play a role in the epigenetic regulation of gene expression through the process of active DNA demethylation.</text>
</comment>
<comment type="catalytic activity">
    <reaction evidence="1">
        <text>cytidine(6666) in apoB mRNA + H2O + H(+) = uridine(6666) in apoB mRNA + NH4(+)</text>
        <dbReference type="Rhea" id="RHEA:21772"/>
        <dbReference type="Rhea" id="RHEA-COMP:13888"/>
        <dbReference type="Rhea" id="RHEA-COMP:13889"/>
        <dbReference type="ChEBI" id="CHEBI:15377"/>
        <dbReference type="ChEBI" id="CHEBI:15378"/>
        <dbReference type="ChEBI" id="CHEBI:28938"/>
        <dbReference type="ChEBI" id="CHEBI:65315"/>
        <dbReference type="ChEBI" id="CHEBI:82748"/>
        <dbReference type="EC" id="3.5.4.36"/>
    </reaction>
</comment>
<comment type="cofactor">
    <cofactor evidence="1">
        <name>Zn(2+)</name>
        <dbReference type="ChEBI" id="CHEBI:29105"/>
    </cofactor>
    <text evidence="1">Binds 1 Zn(2+) ion per subunit.</text>
</comment>
<comment type="subunit">
    <text evidence="1">Homotetramer.</text>
</comment>
<comment type="similarity">
    <text evidence="4">Belongs to the cytidine and deoxycytidylate deaminase family.</text>
</comment>
<accession>Q3SYR3</accession>
<reference key="1">
    <citation type="submission" date="2005-11" db="EMBL/GenBank/DDBJ databases">
        <title>Characterization of apolipoprotein B mRNA editing enzyme catalytic polypeptide-like 2 (APOBEC-2) in Korean cattle.</title>
        <authorList>
            <person name="Chung H.J."/>
            <person name="Jung K.C."/>
            <person name="Lee Y.J."/>
            <person name="Lee J.H."/>
            <person name="Yoon D.H."/>
            <person name="Lee S.H."/>
            <person name="Sang B.C."/>
        </authorList>
    </citation>
    <scope>NUCLEOTIDE SEQUENCE [MRNA]</scope>
    <source>
        <strain>Korean</strain>
    </source>
</reference>
<reference key="2">
    <citation type="submission" date="2005-08" db="EMBL/GenBank/DDBJ databases">
        <authorList>
            <consortium name="NIH - Mammalian Gene Collection (MGC) project"/>
        </authorList>
    </citation>
    <scope>NUCLEOTIDE SEQUENCE [LARGE SCALE MRNA]</scope>
    <source>
        <strain>Hereford</strain>
        <tissue>Heart ventricle</tissue>
    </source>
</reference>
<dbReference type="EC" id="3.5.4.36"/>
<dbReference type="EMBL" id="DQ280381">
    <property type="protein sequence ID" value="ABB90107.1"/>
    <property type="molecule type" value="mRNA"/>
</dbReference>
<dbReference type="EMBL" id="BC103438">
    <property type="protein sequence ID" value="AAI03439.1"/>
    <property type="molecule type" value="mRNA"/>
</dbReference>
<dbReference type="RefSeq" id="NP_001029527.1">
    <property type="nucleotide sequence ID" value="NM_001034355.1"/>
</dbReference>
<dbReference type="SMR" id="Q3SYR3"/>
<dbReference type="FunCoup" id="Q3SYR3">
    <property type="interactions" value="77"/>
</dbReference>
<dbReference type="STRING" id="9913.ENSBTAP00000035907"/>
<dbReference type="PaxDb" id="9913-ENSBTAP00000035907"/>
<dbReference type="GeneID" id="509619"/>
<dbReference type="KEGG" id="bta:509619"/>
<dbReference type="CTD" id="10930"/>
<dbReference type="eggNOG" id="ENOG502RABR">
    <property type="taxonomic scope" value="Eukaryota"/>
</dbReference>
<dbReference type="HOGENOM" id="CLU_080056_0_0_1"/>
<dbReference type="InParanoid" id="Q3SYR3"/>
<dbReference type="OrthoDB" id="8841220at2759"/>
<dbReference type="TreeFam" id="TF331356"/>
<dbReference type="Proteomes" id="UP000009136">
    <property type="component" value="Unplaced"/>
</dbReference>
<dbReference type="GO" id="GO:0005737">
    <property type="term" value="C:cytoplasm"/>
    <property type="evidence" value="ECO:0000318"/>
    <property type="project" value="GO_Central"/>
</dbReference>
<dbReference type="GO" id="GO:0005634">
    <property type="term" value="C:nucleus"/>
    <property type="evidence" value="ECO:0000318"/>
    <property type="project" value="GO_Central"/>
</dbReference>
<dbReference type="GO" id="GO:0004126">
    <property type="term" value="F:cytidine deaminase activity"/>
    <property type="evidence" value="ECO:0000318"/>
    <property type="project" value="GO_Central"/>
</dbReference>
<dbReference type="GO" id="GO:0046872">
    <property type="term" value="F:metal ion binding"/>
    <property type="evidence" value="ECO:0007669"/>
    <property type="project" value="UniProtKB-KW"/>
</dbReference>
<dbReference type="GO" id="GO:0003723">
    <property type="term" value="F:RNA binding"/>
    <property type="evidence" value="ECO:0000318"/>
    <property type="project" value="GO_Central"/>
</dbReference>
<dbReference type="GO" id="GO:0016554">
    <property type="term" value="P:cytidine to uridine editing"/>
    <property type="evidence" value="ECO:0000318"/>
    <property type="project" value="GO_Central"/>
</dbReference>
<dbReference type="GO" id="GO:0006397">
    <property type="term" value="P:mRNA processing"/>
    <property type="evidence" value="ECO:0007669"/>
    <property type="project" value="UniProtKB-KW"/>
</dbReference>
<dbReference type="GO" id="GO:0044029">
    <property type="term" value="P:positive regulation of gene expression via chromosomal CpG island demethylation"/>
    <property type="evidence" value="ECO:0000250"/>
    <property type="project" value="UniProtKB"/>
</dbReference>
<dbReference type="CDD" id="cd01283">
    <property type="entry name" value="cytidine_deaminase"/>
    <property type="match status" value="1"/>
</dbReference>
<dbReference type="FunFam" id="3.40.140.10:FF:000031">
    <property type="entry name" value="Probable C-&gt;U-editing enzyme APOBEC-2"/>
    <property type="match status" value="1"/>
</dbReference>
<dbReference type="Gene3D" id="3.40.140.10">
    <property type="entry name" value="Cytidine Deaminase, domain 2"/>
    <property type="match status" value="1"/>
</dbReference>
<dbReference type="InterPro" id="IPR050610">
    <property type="entry name" value="APOBEC_Cyt_Deaminase"/>
</dbReference>
<dbReference type="InterPro" id="IPR002125">
    <property type="entry name" value="CMP_dCMP_dom"/>
</dbReference>
<dbReference type="InterPro" id="IPR016193">
    <property type="entry name" value="Cytidine_deaminase-like"/>
</dbReference>
<dbReference type="PANTHER" id="PTHR13857:SF4">
    <property type="entry name" value="C-U-EDITING ENZYME APOBEC-2"/>
    <property type="match status" value="1"/>
</dbReference>
<dbReference type="PANTHER" id="PTHR13857">
    <property type="entry name" value="MRNA EDITING ENZYME"/>
    <property type="match status" value="1"/>
</dbReference>
<dbReference type="Pfam" id="PF18772">
    <property type="entry name" value="APOBEC2"/>
    <property type="match status" value="1"/>
</dbReference>
<dbReference type="SUPFAM" id="SSF53927">
    <property type="entry name" value="Cytidine deaminase-like"/>
    <property type="match status" value="1"/>
</dbReference>
<dbReference type="PROSITE" id="PS51747">
    <property type="entry name" value="CYT_DCMP_DEAMINASES_2"/>
    <property type="match status" value="1"/>
</dbReference>
<evidence type="ECO:0000250" key="1">
    <source>
        <dbReference type="UniProtKB" id="Q9Y235"/>
    </source>
</evidence>
<evidence type="ECO:0000255" key="2">
    <source>
        <dbReference type="PROSITE-ProRule" id="PRU01083"/>
    </source>
</evidence>
<evidence type="ECO:0000256" key="3">
    <source>
        <dbReference type="SAM" id="MobiDB-lite"/>
    </source>
</evidence>
<evidence type="ECO:0000305" key="4"/>
<feature type="chain" id="PRO_0000244422" description="Probable C-&gt;U-editing enzyme APOBEC-2">
    <location>
        <begin position="1"/>
        <end position="224"/>
    </location>
</feature>
<feature type="domain" description="CMP/dCMP-type deaminase" evidence="2">
    <location>
        <begin position="64"/>
        <end position="169"/>
    </location>
</feature>
<feature type="region of interest" description="Disordered" evidence="3">
    <location>
        <begin position="1"/>
        <end position="25"/>
    </location>
</feature>
<feature type="active site" description="Proton donor" evidence="1">
    <location>
        <position position="100"/>
    </location>
</feature>
<feature type="binding site" evidence="1">
    <location>
        <position position="60"/>
    </location>
    <ligand>
        <name>Zn(2+)</name>
        <dbReference type="ChEBI" id="CHEBI:29105"/>
        <note>catalytic</note>
    </ligand>
</feature>
<feature type="binding site" evidence="1">
    <location>
        <position position="98"/>
    </location>
    <ligand>
        <name>Zn(2+)</name>
        <dbReference type="ChEBI" id="CHEBI:29105"/>
        <note>catalytic</note>
    </ligand>
</feature>
<feature type="binding site" evidence="1">
    <location>
        <position position="128"/>
    </location>
    <ligand>
        <name>Zn(2+)</name>
        <dbReference type="ChEBI" id="CHEBI:29105"/>
        <note>catalytic</note>
    </ligand>
</feature>
<feature type="binding site" evidence="1">
    <location>
        <position position="131"/>
    </location>
    <ligand>
        <name>Zn(2+)</name>
        <dbReference type="ChEBI" id="CHEBI:29105"/>
        <note>catalytic</note>
    </ligand>
</feature>